<comment type="function">
    <text evidence="1">With LigD forms a non-homologous end joining (NHEJ) DNA repair enzyme, which repairs dsDNA breaks with reduced fidelity. Binds linear dsDNA with 5'- and 3'- overhangs but not closed circular dsDNA nor ssDNA. Recruits and stimulates the ligase activity of LigD.</text>
</comment>
<comment type="subunit">
    <text evidence="1">Homodimer. Interacts with LigD.</text>
</comment>
<comment type="similarity">
    <text evidence="1">Belongs to the prokaryotic Ku family.</text>
</comment>
<dbReference type="EMBL" id="CP001044">
    <property type="protein sequence ID" value="ACC74291.1"/>
    <property type="molecule type" value="Genomic_DNA"/>
</dbReference>
<dbReference type="RefSeq" id="WP_012404455.1">
    <property type="nucleotide sequence ID" value="NC_010623.1"/>
</dbReference>
<dbReference type="SMR" id="B2JMF6"/>
<dbReference type="STRING" id="391038.Bphy_5208"/>
<dbReference type="KEGG" id="bph:Bphy_5208"/>
<dbReference type="eggNOG" id="COG1273">
    <property type="taxonomic scope" value="Bacteria"/>
</dbReference>
<dbReference type="HOGENOM" id="CLU_048975_0_1_4"/>
<dbReference type="OrthoDB" id="9795084at2"/>
<dbReference type="Proteomes" id="UP000001192">
    <property type="component" value="Chromosome 2"/>
</dbReference>
<dbReference type="GO" id="GO:0003690">
    <property type="term" value="F:double-stranded DNA binding"/>
    <property type="evidence" value="ECO:0007669"/>
    <property type="project" value="UniProtKB-UniRule"/>
</dbReference>
<dbReference type="GO" id="GO:0006310">
    <property type="term" value="P:DNA recombination"/>
    <property type="evidence" value="ECO:0007669"/>
    <property type="project" value="UniProtKB-KW"/>
</dbReference>
<dbReference type="GO" id="GO:0006303">
    <property type="term" value="P:double-strand break repair via nonhomologous end joining"/>
    <property type="evidence" value="ECO:0007669"/>
    <property type="project" value="UniProtKB-UniRule"/>
</dbReference>
<dbReference type="Gene3D" id="2.40.290.10">
    <property type="match status" value="1"/>
</dbReference>
<dbReference type="HAMAP" id="MF_01875">
    <property type="entry name" value="Prokaryotic_Ku"/>
    <property type="match status" value="1"/>
</dbReference>
<dbReference type="InterPro" id="IPR006164">
    <property type="entry name" value="Ku70/Ku80_beta-barrel_dom"/>
</dbReference>
<dbReference type="InterPro" id="IPR009187">
    <property type="entry name" value="Prok_Ku"/>
</dbReference>
<dbReference type="InterPro" id="IPR016194">
    <property type="entry name" value="SPOC-like_C_dom_sf"/>
</dbReference>
<dbReference type="NCBIfam" id="TIGR02772">
    <property type="entry name" value="Ku_bact"/>
    <property type="match status" value="1"/>
</dbReference>
<dbReference type="PANTHER" id="PTHR41251">
    <property type="entry name" value="NON-HOMOLOGOUS END JOINING PROTEIN KU"/>
    <property type="match status" value="1"/>
</dbReference>
<dbReference type="PANTHER" id="PTHR41251:SF1">
    <property type="entry name" value="NON-HOMOLOGOUS END JOINING PROTEIN KU"/>
    <property type="match status" value="1"/>
</dbReference>
<dbReference type="Pfam" id="PF02735">
    <property type="entry name" value="Ku"/>
    <property type="match status" value="1"/>
</dbReference>
<dbReference type="PIRSF" id="PIRSF006493">
    <property type="entry name" value="Prok_Ku"/>
    <property type="match status" value="1"/>
</dbReference>
<dbReference type="SMART" id="SM00559">
    <property type="entry name" value="Ku78"/>
    <property type="match status" value="1"/>
</dbReference>
<dbReference type="SUPFAM" id="SSF100939">
    <property type="entry name" value="SPOC domain-like"/>
    <property type="match status" value="1"/>
</dbReference>
<organism>
    <name type="scientific">Paraburkholderia phymatum (strain DSM 17167 / CIP 108236 / LMG 21445 / STM815)</name>
    <name type="common">Burkholderia phymatum</name>
    <dbReference type="NCBI Taxonomy" id="391038"/>
    <lineage>
        <taxon>Bacteria</taxon>
        <taxon>Pseudomonadati</taxon>
        <taxon>Pseudomonadota</taxon>
        <taxon>Betaproteobacteria</taxon>
        <taxon>Burkholderiales</taxon>
        <taxon>Burkholderiaceae</taxon>
        <taxon>Paraburkholderia</taxon>
    </lineage>
</organism>
<protein>
    <recommendedName>
        <fullName evidence="1">Non-homologous end joining protein Ku</fullName>
    </recommendedName>
</protein>
<accession>B2JMF6</accession>
<reference key="1">
    <citation type="journal article" date="2014" name="Stand. Genomic Sci.">
        <title>Complete genome sequence of Burkholderia phymatum STM815(T), a broad host range and efficient nitrogen-fixing symbiont of Mimosa species.</title>
        <authorList>
            <person name="Moulin L."/>
            <person name="Klonowska A."/>
            <person name="Caroline B."/>
            <person name="Booth K."/>
            <person name="Vriezen J.A."/>
            <person name="Melkonian R."/>
            <person name="James E.K."/>
            <person name="Young J.P."/>
            <person name="Bena G."/>
            <person name="Hauser L."/>
            <person name="Land M."/>
            <person name="Kyrpides N."/>
            <person name="Bruce D."/>
            <person name="Chain P."/>
            <person name="Copeland A."/>
            <person name="Pitluck S."/>
            <person name="Woyke T."/>
            <person name="Lizotte-Waniewski M."/>
            <person name="Bristow J."/>
            <person name="Riley M."/>
        </authorList>
    </citation>
    <scope>NUCLEOTIDE SEQUENCE [LARGE SCALE GENOMIC DNA]</scope>
    <source>
        <strain>DSM 17167 / CIP 108236 / LMG 21445 / STM815</strain>
    </source>
</reference>
<sequence>MAARSIASLSLSFGLVSIPVKLYSATESSSDVRFNLLAPDGSRVRQQYISESSGAVVERSSMKKGYEFEKDRFVVFTADELKALEESASHVVEIVAFIPEKSIDPVYYDKAYYIAPDRRGGKPYSLLQQALAESGRCALAKWASKGKTRIVQVRPSADGLVFQQLLFADEVRSMKDLNIEHVDVSASELKLAMQIIEQGTEDHYDPAAYEDEEKKRILAAIDRKIEGKQVISNERADVPAEGGEVIDLMEALRASLRGGAKAKPAAAPRRKAPEPVAGMAEATRARKPAARAPKSPAEAPAKVRARK</sequence>
<evidence type="ECO:0000255" key="1">
    <source>
        <dbReference type="HAMAP-Rule" id="MF_01875"/>
    </source>
</evidence>
<evidence type="ECO:0000256" key="2">
    <source>
        <dbReference type="SAM" id="MobiDB-lite"/>
    </source>
</evidence>
<name>KU_PARP8</name>
<gene>
    <name evidence="1" type="primary">ku</name>
    <name type="ordered locus">Bphy_5208</name>
</gene>
<keyword id="KW-0227">DNA damage</keyword>
<keyword id="KW-0233">DNA recombination</keyword>
<keyword id="KW-0234">DNA repair</keyword>
<keyword id="KW-0238">DNA-binding</keyword>
<keyword id="KW-1185">Reference proteome</keyword>
<proteinExistence type="inferred from homology"/>
<feature type="chain" id="PRO_0000389179" description="Non-homologous end joining protein Ku">
    <location>
        <begin position="1"/>
        <end position="307"/>
    </location>
</feature>
<feature type="domain" description="Ku" evidence="1">
    <location>
        <begin position="11"/>
        <end position="179"/>
    </location>
</feature>
<feature type="region of interest" description="Disordered" evidence="2">
    <location>
        <begin position="257"/>
        <end position="307"/>
    </location>
</feature>
<feature type="compositionally biased region" description="Low complexity" evidence="2">
    <location>
        <begin position="257"/>
        <end position="267"/>
    </location>
</feature>
<feature type="compositionally biased region" description="Low complexity" evidence="2">
    <location>
        <begin position="290"/>
        <end position="307"/>
    </location>
</feature>